<comment type="function">
    <text evidence="1 4">Regulator of autophagy that contributes to antagonize BECN1-mediated cellular autophagy at the endoplasmic reticulum. Participates in the interaction of BCL2 with BECN1 and is required for BCL2-mediated depression of endoplasmic reticulum Ca(2+) stores during autophagy. Contributes to BIK-initiated autophagy, while it is not involved in BIK-dependent activation of caspases. Involved in life span control, probably via its function as regulator of autophagy (By similarity).</text>
</comment>
<comment type="cofactor">
    <cofactor evidence="1">
        <name>[2Fe-2S] cluster</name>
        <dbReference type="ChEBI" id="CHEBI:190135"/>
    </cofactor>
    <text evidence="1">Binds 1 [2Fe-2S] cluster.</text>
</comment>
<comment type="biophysicochemical properties">
    <redoxPotential>
        <text>E is 0 +/- 10 mV for 2Fe-2S at pH 7.5.</text>
    </redoxPotential>
</comment>
<comment type="subunit">
    <text evidence="1">Homodimer. Interacts with BCL2; the interaction is direct and disrupted by BIK interaction with BCL2. Interacts with BCL2L1. Interacts with ITPR1 (By similarity).</text>
</comment>
<comment type="subcellular location">
    <subcellularLocation>
        <location evidence="4">Endoplasmic reticulum membrane</location>
        <topology evidence="4">Single-pass membrane protein</topology>
    </subcellularLocation>
    <subcellularLocation>
        <location evidence="4">Mitochondrion outer membrane</location>
        <topology evidence="4">Single-pass membrane protein</topology>
    </subcellularLocation>
    <text>According to PubMed:19451219, it mainly localizes to the mitochondrion outer membrane and localizes only at low level to the endoplasmic reticulum. However, inverse results are observed in human cells.</text>
</comment>
<comment type="tissue specificity">
    <text evidence="3">Brain.</text>
</comment>
<comment type="induction">
    <text evidence="4">Expression decreases in an age-dependent manner.</text>
</comment>
<comment type="disruption phenotype">
    <text evidence="4">Premature aging associated with a shortened life span, probably caused by mitochondrial degeneration and autophagy. 8 week old mice begin to acquire a set of aged appearance phenomena remarkably similar to those of premature aging syndrome, including prominent eyes and protruding ears. Ocular abnormalities are observed: mice develop opaque eyes and blindness, which is accompanied by cornea damage at 20 week old. The opacity of the cornea is due to debris deposition in the scar tissue outside the cornea. In addition, corneal neovascularization is observed, possibly impairing vision. An early depigmentation in the fur at around 48 week old is also observed; furthermore, hair follicle atrophy and a decreased hair density is detected. A decrease in the hair regrowth rate is also observed. Additionally, the skin of 48-week-old mice exhibits a phenotype with a noticeably thickened dermis, an expanded surface, and a significant decrease in subcutaneous adipose tissue and muscle. The trabeculae of the femur are noticeably thinner and dual energy X-ray absorptiometer (DEXA) detects a decrease in femur density after 8 week old. Mice also display a significant lordokyphosis phenotype after 12 week old; leading to a decrease in mean thoracic volume and thence pulmonary function abnormalities. Muscle degeneration is detectable at 3 week old with a progressive degeneration of muscle fibers and the magnitude of the degeneration exacerbated with age.</text>
</comment>
<comment type="similarity">
    <text evidence="5">Belongs to the CISD protein family. CISD2 subfamily.</text>
</comment>
<name>CISD2_MOUSE</name>
<feature type="chain" id="PRO_0000316006" description="CDGSH iron-sulfur domain-containing protein 2">
    <location>
        <begin position="1"/>
        <end position="135"/>
    </location>
</feature>
<feature type="topological domain" description="Lumenal" evidence="2">
    <location>
        <begin position="1"/>
        <end position="37"/>
    </location>
</feature>
<feature type="transmembrane region" description="Helical" evidence="2">
    <location>
        <begin position="38"/>
        <end position="60"/>
    </location>
</feature>
<feature type="topological domain" description="Cytoplasmic" evidence="2">
    <location>
        <begin position="61"/>
        <end position="135"/>
    </location>
</feature>
<feature type="binding site" evidence="1">
    <location>
        <position position="99"/>
    </location>
    <ligand>
        <name>[2Fe-2S] cluster</name>
        <dbReference type="ChEBI" id="CHEBI:190135"/>
    </ligand>
</feature>
<feature type="binding site" evidence="1">
    <location>
        <position position="101"/>
    </location>
    <ligand>
        <name>[2Fe-2S] cluster</name>
        <dbReference type="ChEBI" id="CHEBI:190135"/>
    </ligand>
</feature>
<feature type="binding site" evidence="1">
    <location>
        <position position="110"/>
    </location>
    <ligand>
        <name>[2Fe-2S] cluster</name>
        <dbReference type="ChEBI" id="CHEBI:190135"/>
    </ligand>
</feature>
<feature type="binding site" evidence="1">
    <location>
        <position position="114"/>
    </location>
    <ligand>
        <name>[2Fe-2S] cluster</name>
        <dbReference type="ChEBI" id="CHEBI:190135"/>
    </ligand>
</feature>
<feature type="sequence conflict" description="In Ref. 2; BAB23237." evidence="5" ref="2">
    <original>P</original>
    <variation>A</variation>
    <location>
        <position position="61"/>
    </location>
</feature>
<protein>
    <recommendedName>
        <fullName>CDGSH iron-sulfur domain-containing protein 2</fullName>
    </recommendedName>
    <alternativeName>
        <fullName>MitoNEET-related 1 protein</fullName>
        <shortName>Miner1</shortName>
    </alternativeName>
    <alternativeName>
        <fullName>Nervous system overexpressed protein 70</fullName>
    </alternativeName>
</protein>
<proteinExistence type="evidence at protein level"/>
<sequence length="135" mass="15242">MVLDSVARIVKVQLPAYLKQLPVPDSITGFARLTVSDWLRLLPFLGVLALLGYLAVRPFFPKKKQQKDSLINLKIQKENPKVVNEINIEDLCLTKAAYCRCWRSKTFPACDGSHNKHNELTGDNVGPLILKKKEV</sequence>
<accession>Q9CQB5</accession>
<accession>Q9D0Y0</accession>
<organism>
    <name type="scientific">Mus musculus</name>
    <name type="common">Mouse</name>
    <dbReference type="NCBI Taxonomy" id="10090"/>
    <lineage>
        <taxon>Eukaryota</taxon>
        <taxon>Metazoa</taxon>
        <taxon>Chordata</taxon>
        <taxon>Craniata</taxon>
        <taxon>Vertebrata</taxon>
        <taxon>Euteleostomi</taxon>
        <taxon>Mammalia</taxon>
        <taxon>Eutheria</taxon>
        <taxon>Euarchontoglires</taxon>
        <taxon>Glires</taxon>
        <taxon>Rodentia</taxon>
        <taxon>Myomorpha</taxon>
        <taxon>Muroidea</taxon>
        <taxon>Muridae</taxon>
        <taxon>Murinae</taxon>
        <taxon>Mus</taxon>
        <taxon>Mus</taxon>
    </lineage>
</organism>
<gene>
    <name type="primary">Cisd2</name>
    <name type="synonym">Cdgsh2</name>
    <name type="synonym">Noxp70</name>
    <name type="synonym">Zcd2</name>
</gene>
<evidence type="ECO:0000250" key="1"/>
<evidence type="ECO:0000255" key="2"/>
<evidence type="ECO:0000269" key="3">
    <source>
    </source>
</evidence>
<evidence type="ECO:0000269" key="4">
    <source>
    </source>
</evidence>
<evidence type="ECO:0000305" key="5"/>
<reference key="1">
    <citation type="journal article" date="2006" name="J. Neurochem.">
        <title>Noxp20 and Noxp70, two new markers of early neuronal differentiation, detected in teratocarcinoma-derived neuroectodermic precursor cells.</title>
        <authorList>
            <person name="Boucquey M.F.A."/>
            <person name="De Plaen E."/>
            <person name="Locker M."/>
            <person name="Poliard A."/>
            <person name="Mouillet-Richard S."/>
            <person name="Boon T."/>
            <person name="Kellermann O."/>
        </authorList>
    </citation>
    <scope>NUCLEOTIDE SEQUENCE [MRNA]</scope>
    <scope>TISSUE SPECIFICITY</scope>
    <source>
        <strain>129/Sv</strain>
    </source>
</reference>
<reference key="2">
    <citation type="journal article" date="2005" name="Science">
        <title>The transcriptional landscape of the mammalian genome.</title>
        <authorList>
            <person name="Carninci P."/>
            <person name="Kasukawa T."/>
            <person name="Katayama S."/>
            <person name="Gough J."/>
            <person name="Frith M.C."/>
            <person name="Maeda N."/>
            <person name="Oyama R."/>
            <person name="Ravasi T."/>
            <person name="Lenhard B."/>
            <person name="Wells C."/>
            <person name="Kodzius R."/>
            <person name="Shimokawa K."/>
            <person name="Bajic V.B."/>
            <person name="Brenner S.E."/>
            <person name="Batalov S."/>
            <person name="Forrest A.R."/>
            <person name="Zavolan M."/>
            <person name="Davis M.J."/>
            <person name="Wilming L.G."/>
            <person name="Aidinis V."/>
            <person name="Allen J.E."/>
            <person name="Ambesi-Impiombato A."/>
            <person name="Apweiler R."/>
            <person name="Aturaliya R.N."/>
            <person name="Bailey T.L."/>
            <person name="Bansal M."/>
            <person name="Baxter L."/>
            <person name="Beisel K.W."/>
            <person name="Bersano T."/>
            <person name="Bono H."/>
            <person name="Chalk A.M."/>
            <person name="Chiu K.P."/>
            <person name="Choudhary V."/>
            <person name="Christoffels A."/>
            <person name="Clutterbuck D.R."/>
            <person name="Crowe M.L."/>
            <person name="Dalla E."/>
            <person name="Dalrymple B.P."/>
            <person name="de Bono B."/>
            <person name="Della Gatta G."/>
            <person name="di Bernardo D."/>
            <person name="Down T."/>
            <person name="Engstrom P."/>
            <person name="Fagiolini M."/>
            <person name="Faulkner G."/>
            <person name="Fletcher C.F."/>
            <person name="Fukushima T."/>
            <person name="Furuno M."/>
            <person name="Futaki S."/>
            <person name="Gariboldi M."/>
            <person name="Georgii-Hemming P."/>
            <person name="Gingeras T.R."/>
            <person name="Gojobori T."/>
            <person name="Green R.E."/>
            <person name="Gustincich S."/>
            <person name="Harbers M."/>
            <person name="Hayashi Y."/>
            <person name="Hensch T.K."/>
            <person name="Hirokawa N."/>
            <person name="Hill D."/>
            <person name="Huminiecki L."/>
            <person name="Iacono M."/>
            <person name="Ikeo K."/>
            <person name="Iwama A."/>
            <person name="Ishikawa T."/>
            <person name="Jakt M."/>
            <person name="Kanapin A."/>
            <person name="Katoh M."/>
            <person name="Kawasawa Y."/>
            <person name="Kelso J."/>
            <person name="Kitamura H."/>
            <person name="Kitano H."/>
            <person name="Kollias G."/>
            <person name="Krishnan S.P."/>
            <person name="Kruger A."/>
            <person name="Kummerfeld S.K."/>
            <person name="Kurochkin I.V."/>
            <person name="Lareau L.F."/>
            <person name="Lazarevic D."/>
            <person name="Lipovich L."/>
            <person name="Liu J."/>
            <person name="Liuni S."/>
            <person name="McWilliam S."/>
            <person name="Madan Babu M."/>
            <person name="Madera M."/>
            <person name="Marchionni L."/>
            <person name="Matsuda H."/>
            <person name="Matsuzawa S."/>
            <person name="Miki H."/>
            <person name="Mignone F."/>
            <person name="Miyake S."/>
            <person name="Morris K."/>
            <person name="Mottagui-Tabar S."/>
            <person name="Mulder N."/>
            <person name="Nakano N."/>
            <person name="Nakauchi H."/>
            <person name="Ng P."/>
            <person name="Nilsson R."/>
            <person name="Nishiguchi S."/>
            <person name="Nishikawa S."/>
            <person name="Nori F."/>
            <person name="Ohara O."/>
            <person name="Okazaki Y."/>
            <person name="Orlando V."/>
            <person name="Pang K.C."/>
            <person name="Pavan W.J."/>
            <person name="Pavesi G."/>
            <person name="Pesole G."/>
            <person name="Petrovsky N."/>
            <person name="Piazza S."/>
            <person name="Reed J."/>
            <person name="Reid J.F."/>
            <person name="Ring B.Z."/>
            <person name="Ringwald M."/>
            <person name="Rost B."/>
            <person name="Ruan Y."/>
            <person name="Salzberg S.L."/>
            <person name="Sandelin A."/>
            <person name="Schneider C."/>
            <person name="Schoenbach C."/>
            <person name="Sekiguchi K."/>
            <person name="Semple C.A."/>
            <person name="Seno S."/>
            <person name="Sessa L."/>
            <person name="Sheng Y."/>
            <person name="Shibata Y."/>
            <person name="Shimada H."/>
            <person name="Shimada K."/>
            <person name="Silva D."/>
            <person name="Sinclair B."/>
            <person name="Sperling S."/>
            <person name="Stupka E."/>
            <person name="Sugiura K."/>
            <person name="Sultana R."/>
            <person name="Takenaka Y."/>
            <person name="Taki K."/>
            <person name="Tammoja K."/>
            <person name="Tan S.L."/>
            <person name="Tang S."/>
            <person name="Taylor M.S."/>
            <person name="Tegner J."/>
            <person name="Teichmann S.A."/>
            <person name="Ueda H.R."/>
            <person name="van Nimwegen E."/>
            <person name="Verardo R."/>
            <person name="Wei C.L."/>
            <person name="Yagi K."/>
            <person name="Yamanishi H."/>
            <person name="Zabarovsky E."/>
            <person name="Zhu S."/>
            <person name="Zimmer A."/>
            <person name="Hide W."/>
            <person name="Bult C."/>
            <person name="Grimmond S.M."/>
            <person name="Teasdale R.D."/>
            <person name="Liu E.T."/>
            <person name="Brusic V."/>
            <person name="Quackenbush J."/>
            <person name="Wahlestedt C."/>
            <person name="Mattick J.S."/>
            <person name="Hume D.A."/>
            <person name="Kai C."/>
            <person name="Sasaki D."/>
            <person name="Tomaru Y."/>
            <person name="Fukuda S."/>
            <person name="Kanamori-Katayama M."/>
            <person name="Suzuki M."/>
            <person name="Aoki J."/>
            <person name="Arakawa T."/>
            <person name="Iida J."/>
            <person name="Imamura K."/>
            <person name="Itoh M."/>
            <person name="Kato T."/>
            <person name="Kawaji H."/>
            <person name="Kawagashira N."/>
            <person name="Kawashima T."/>
            <person name="Kojima M."/>
            <person name="Kondo S."/>
            <person name="Konno H."/>
            <person name="Nakano K."/>
            <person name="Ninomiya N."/>
            <person name="Nishio T."/>
            <person name="Okada M."/>
            <person name="Plessy C."/>
            <person name="Shibata K."/>
            <person name="Shiraki T."/>
            <person name="Suzuki S."/>
            <person name="Tagami M."/>
            <person name="Waki K."/>
            <person name="Watahiki A."/>
            <person name="Okamura-Oho Y."/>
            <person name="Suzuki H."/>
            <person name="Kawai J."/>
            <person name="Hayashizaki Y."/>
        </authorList>
    </citation>
    <scope>NUCLEOTIDE SEQUENCE [LARGE SCALE MRNA]</scope>
    <source>
        <strain>C57BL/6J</strain>
        <tissue>Cerebellum</tissue>
    </source>
</reference>
<reference key="3">
    <citation type="journal article" date="2004" name="Genome Res.">
        <title>The status, quality, and expansion of the NIH full-length cDNA project: the Mammalian Gene Collection (MGC).</title>
        <authorList>
            <consortium name="The MGC Project Team"/>
        </authorList>
    </citation>
    <scope>NUCLEOTIDE SEQUENCE [LARGE SCALE MRNA]</scope>
    <source>
        <strain>FVB/N-3</strain>
        <tissue>Mammary tumor</tissue>
    </source>
</reference>
<reference key="4">
    <citation type="journal article" date="2009" name="Genes Dev.">
        <title>Cisd2 deficiency drives premature aging and causes mitochondria-mediated defects in mice.</title>
        <authorList>
            <person name="Chen Y.F."/>
            <person name="Kao C.H."/>
            <person name="Chen Y.T."/>
            <person name="Wang C.H."/>
            <person name="Wu C.Y."/>
            <person name="Tsai C.Y."/>
            <person name="Liu F.C."/>
            <person name="Yang C.W."/>
            <person name="Wei Y.H."/>
            <person name="Hsu M.T."/>
            <person name="Tsai S.F."/>
            <person name="Tsai T.F."/>
        </authorList>
    </citation>
    <scope>FUNCTION</scope>
    <scope>SUBCELLULAR LOCATION</scope>
    <scope>INDUCTION</scope>
    <scope>DISRUPTION PHENOTYPE</scope>
</reference>
<reference key="5">
    <citation type="journal article" date="2010" name="Cell">
        <title>A tissue-specific atlas of mouse protein phosphorylation and expression.</title>
        <authorList>
            <person name="Huttlin E.L."/>
            <person name="Jedrychowski M.P."/>
            <person name="Elias J.E."/>
            <person name="Goswami T."/>
            <person name="Rad R."/>
            <person name="Beausoleil S.A."/>
            <person name="Villen J."/>
            <person name="Haas W."/>
            <person name="Sowa M.E."/>
            <person name="Gygi S.P."/>
        </authorList>
    </citation>
    <scope>IDENTIFICATION BY MASS SPECTROMETRY [LARGE SCALE ANALYSIS]</scope>
    <source>
        <tissue>Brain</tissue>
        <tissue>Brown adipose tissue</tissue>
        <tissue>Heart</tissue>
        <tissue>Kidney</tissue>
        <tissue>Liver</tissue>
        <tissue>Lung</tissue>
        <tissue>Pancreas</tissue>
        <tissue>Spleen</tissue>
        <tissue>Testis</tissue>
    </source>
</reference>
<keyword id="KW-0001">2Fe-2S</keyword>
<keyword id="KW-0072">Autophagy</keyword>
<keyword id="KW-0256">Endoplasmic reticulum</keyword>
<keyword id="KW-0408">Iron</keyword>
<keyword id="KW-0411">Iron-sulfur</keyword>
<keyword id="KW-0472">Membrane</keyword>
<keyword id="KW-0479">Metal-binding</keyword>
<keyword id="KW-0496">Mitochondrion</keyword>
<keyword id="KW-1000">Mitochondrion outer membrane</keyword>
<keyword id="KW-1185">Reference proteome</keyword>
<keyword id="KW-0812">Transmembrane</keyword>
<keyword id="KW-1133">Transmembrane helix</keyword>
<dbReference type="EMBL" id="AM162549">
    <property type="protein sequence ID" value="CAJ44265.1"/>
    <property type="molecule type" value="mRNA"/>
</dbReference>
<dbReference type="EMBL" id="AK003486">
    <property type="protein sequence ID" value="BAB22814.1"/>
    <property type="molecule type" value="mRNA"/>
</dbReference>
<dbReference type="EMBL" id="AK004257">
    <property type="protein sequence ID" value="BAB23237.1"/>
    <property type="molecule type" value="mRNA"/>
</dbReference>
<dbReference type="EMBL" id="AK005184">
    <property type="protein sequence ID" value="BAB23868.1"/>
    <property type="molecule type" value="mRNA"/>
</dbReference>
<dbReference type="EMBL" id="BC058279">
    <property type="protein sequence ID" value="AAH58279.1"/>
    <property type="molecule type" value="mRNA"/>
</dbReference>
<dbReference type="CCDS" id="CCDS17856.1"/>
<dbReference type="RefSeq" id="NP_080178.1">
    <property type="nucleotide sequence ID" value="NM_025902.3"/>
</dbReference>
<dbReference type="RefSeq" id="XP_006501981.1">
    <property type="nucleotide sequence ID" value="XM_006501918.3"/>
</dbReference>
<dbReference type="SMR" id="Q9CQB5"/>
<dbReference type="BioGRID" id="211870">
    <property type="interactions" value="3"/>
</dbReference>
<dbReference type="FunCoup" id="Q9CQB5">
    <property type="interactions" value="2647"/>
</dbReference>
<dbReference type="STRING" id="10090.ENSMUSP00000029815"/>
<dbReference type="iPTMnet" id="Q9CQB5"/>
<dbReference type="PhosphoSitePlus" id="Q9CQB5"/>
<dbReference type="SwissPalm" id="Q9CQB5"/>
<dbReference type="jPOST" id="Q9CQB5"/>
<dbReference type="PaxDb" id="10090-ENSMUSP00000029815"/>
<dbReference type="PeptideAtlas" id="Q9CQB5"/>
<dbReference type="ProteomicsDB" id="281626"/>
<dbReference type="Pumba" id="Q9CQB5"/>
<dbReference type="Antibodypedia" id="2500">
    <property type="antibodies" value="174 antibodies from 30 providers"/>
</dbReference>
<dbReference type="DNASU" id="67006"/>
<dbReference type="Ensembl" id="ENSMUST00000029815.8">
    <property type="protein sequence ID" value="ENSMUSP00000029815.8"/>
    <property type="gene ID" value="ENSMUSG00000028165.10"/>
</dbReference>
<dbReference type="GeneID" id="67006"/>
<dbReference type="KEGG" id="mmu:67006"/>
<dbReference type="UCSC" id="uc008rlk.2">
    <property type="organism name" value="mouse"/>
</dbReference>
<dbReference type="AGR" id="MGI:1914256"/>
<dbReference type="CTD" id="493856"/>
<dbReference type="MGI" id="MGI:1914256">
    <property type="gene designation" value="Cisd2"/>
</dbReference>
<dbReference type="VEuPathDB" id="HostDB:ENSMUSG00000028165"/>
<dbReference type="eggNOG" id="KOG3461">
    <property type="taxonomic scope" value="Eukaryota"/>
</dbReference>
<dbReference type="GeneTree" id="ENSGT00940000156660"/>
<dbReference type="HOGENOM" id="CLU_132293_1_0_1"/>
<dbReference type="InParanoid" id="Q9CQB5"/>
<dbReference type="OMA" id="QIRKHEP"/>
<dbReference type="OrthoDB" id="449252at2759"/>
<dbReference type="PhylomeDB" id="Q9CQB5"/>
<dbReference type="TreeFam" id="TF324661"/>
<dbReference type="BioGRID-ORCS" id="67006">
    <property type="hits" value="5 hits in 76 CRISPR screens"/>
</dbReference>
<dbReference type="ChiTaRS" id="Cisd2">
    <property type="organism name" value="mouse"/>
</dbReference>
<dbReference type="PRO" id="PR:Q9CQB5"/>
<dbReference type="Proteomes" id="UP000000589">
    <property type="component" value="Chromosome 3"/>
</dbReference>
<dbReference type="RNAct" id="Q9CQB5">
    <property type="molecule type" value="protein"/>
</dbReference>
<dbReference type="Bgee" id="ENSMUSG00000028165">
    <property type="expression patterns" value="Expressed in interventricular septum and 227 other cell types or tissues"/>
</dbReference>
<dbReference type="ExpressionAtlas" id="Q9CQB5">
    <property type="expression patterns" value="baseline and differential"/>
</dbReference>
<dbReference type="GO" id="GO:0005783">
    <property type="term" value="C:endoplasmic reticulum"/>
    <property type="evidence" value="ECO:0000266"/>
    <property type="project" value="MGI"/>
</dbReference>
<dbReference type="GO" id="GO:0005789">
    <property type="term" value="C:endoplasmic reticulum membrane"/>
    <property type="evidence" value="ECO:0000314"/>
    <property type="project" value="UniProtKB"/>
</dbReference>
<dbReference type="GO" id="GO:0005741">
    <property type="term" value="C:mitochondrial outer membrane"/>
    <property type="evidence" value="ECO:0000314"/>
    <property type="project" value="UniProtKB"/>
</dbReference>
<dbReference type="GO" id="GO:0097038">
    <property type="term" value="C:perinuclear endoplasmic reticulum"/>
    <property type="evidence" value="ECO:0007669"/>
    <property type="project" value="Ensembl"/>
</dbReference>
<dbReference type="GO" id="GO:0048471">
    <property type="term" value="C:perinuclear region of cytoplasm"/>
    <property type="evidence" value="ECO:0000266"/>
    <property type="project" value="MGI"/>
</dbReference>
<dbReference type="GO" id="GO:0032991">
    <property type="term" value="C:protein-containing complex"/>
    <property type="evidence" value="ECO:0007669"/>
    <property type="project" value="Ensembl"/>
</dbReference>
<dbReference type="GO" id="GO:0051537">
    <property type="term" value="F:2 iron, 2 sulfur cluster binding"/>
    <property type="evidence" value="ECO:0000250"/>
    <property type="project" value="UniProtKB"/>
</dbReference>
<dbReference type="GO" id="GO:0046872">
    <property type="term" value="F:metal ion binding"/>
    <property type="evidence" value="ECO:0007669"/>
    <property type="project" value="UniProtKB-KW"/>
</dbReference>
<dbReference type="GO" id="GO:0042803">
    <property type="term" value="F:protein homodimerization activity"/>
    <property type="evidence" value="ECO:0000250"/>
    <property type="project" value="UniProtKB"/>
</dbReference>
<dbReference type="GO" id="GO:0000422">
    <property type="term" value="P:autophagy of mitochondrion"/>
    <property type="evidence" value="ECO:0000315"/>
    <property type="project" value="UniProtKB"/>
</dbReference>
<dbReference type="GO" id="GO:0010506">
    <property type="term" value="P:regulation of autophagy"/>
    <property type="evidence" value="ECO:0007669"/>
    <property type="project" value="Ensembl"/>
</dbReference>
<dbReference type="FunFam" id="3.40.5.90:FF:000001">
    <property type="entry name" value="CDGSH iron-sulfur domain-containing protein 1"/>
    <property type="match status" value="1"/>
</dbReference>
<dbReference type="Gene3D" id="3.40.5.90">
    <property type="entry name" value="CDGSH iron-sulfur domain, mitoNEET-type"/>
    <property type="match status" value="1"/>
</dbReference>
<dbReference type="InterPro" id="IPR045131">
    <property type="entry name" value="CISD1/2"/>
</dbReference>
<dbReference type="InterPro" id="IPR018967">
    <property type="entry name" value="FeS-contain_CDGSH-typ"/>
</dbReference>
<dbReference type="InterPro" id="IPR019610">
    <property type="entry name" value="FeS-contain_mitoNEET_N"/>
</dbReference>
<dbReference type="InterPro" id="IPR042216">
    <property type="entry name" value="MitoNEET_CISD"/>
</dbReference>
<dbReference type="PANTHER" id="PTHR13680">
    <property type="entry name" value="CDGSH IRON-SULFUR DOMAIN-CONTAINING PROTEIN 1"/>
    <property type="match status" value="1"/>
</dbReference>
<dbReference type="PANTHER" id="PTHR13680:SF33">
    <property type="entry name" value="CDGSH IRON-SULFUR DOMAIN-CONTAINING PROTEIN 2"/>
    <property type="match status" value="1"/>
</dbReference>
<dbReference type="Pfam" id="PF10660">
    <property type="entry name" value="MitoNEET_N"/>
    <property type="match status" value="1"/>
</dbReference>
<dbReference type="Pfam" id="PF09360">
    <property type="entry name" value="zf-CDGSH"/>
    <property type="match status" value="1"/>
</dbReference>
<dbReference type="SMART" id="SM00704">
    <property type="entry name" value="ZnF_CDGSH"/>
    <property type="match status" value="1"/>
</dbReference>